<gene>
    <name type="ordered locus">BU553</name>
</gene>
<dbReference type="EMBL" id="BA000003">
    <property type="protein sequence ID" value="BAB13245.1"/>
    <property type="status" value="ALT_INIT"/>
    <property type="molecule type" value="Genomic_DNA"/>
</dbReference>
<dbReference type="RefSeq" id="NP_240359.1">
    <property type="nucleotide sequence ID" value="NC_002528.1"/>
</dbReference>
<dbReference type="RefSeq" id="WP_029585621.1">
    <property type="nucleotide sequence ID" value="NZ_AP036055.1"/>
</dbReference>
<dbReference type="SMR" id="P57618"/>
<dbReference type="STRING" id="563178.BUAP5A_546"/>
<dbReference type="EnsemblBacteria" id="BAB13245">
    <property type="protein sequence ID" value="BAB13245"/>
    <property type="gene ID" value="BAB13245"/>
</dbReference>
<dbReference type="KEGG" id="buc:BU553"/>
<dbReference type="PATRIC" id="fig|107806.10.peg.557"/>
<dbReference type="eggNOG" id="COG2924">
    <property type="taxonomic scope" value="Bacteria"/>
</dbReference>
<dbReference type="HOGENOM" id="CLU_170994_0_0_6"/>
<dbReference type="Proteomes" id="UP000001806">
    <property type="component" value="Chromosome"/>
</dbReference>
<dbReference type="GO" id="GO:0005829">
    <property type="term" value="C:cytosol"/>
    <property type="evidence" value="ECO:0007669"/>
    <property type="project" value="TreeGrafter"/>
</dbReference>
<dbReference type="GO" id="GO:0005506">
    <property type="term" value="F:iron ion binding"/>
    <property type="evidence" value="ECO:0007669"/>
    <property type="project" value="UniProtKB-UniRule"/>
</dbReference>
<dbReference type="GO" id="GO:0034599">
    <property type="term" value="P:cellular response to oxidative stress"/>
    <property type="evidence" value="ECO:0007669"/>
    <property type="project" value="TreeGrafter"/>
</dbReference>
<dbReference type="Gene3D" id="1.10.3880.10">
    <property type="entry name" value="Fe(II) trafficking protein YggX"/>
    <property type="match status" value="1"/>
</dbReference>
<dbReference type="HAMAP" id="MF_00686">
    <property type="entry name" value="Fe_traffic_YggX"/>
    <property type="match status" value="1"/>
</dbReference>
<dbReference type="InterPro" id="IPR007457">
    <property type="entry name" value="Fe_traffick_prot_YggX"/>
</dbReference>
<dbReference type="InterPro" id="IPR036766">
    <property type="entry name" value="Fe_traffick_prot_YggX_sf"/>
</dbReference>
<dbReference type="NCBIfam" id="NF003817">
    <property type="entry name" value="PRK05408.1"/>
    <property type="match status" value="1"/>
</dbReference>
<dbReference type="PANTHER" id="PTHR36965">
    <property type="entry name" value="FE(2+)-TRAFFICKING PROTEIN-RELATED"/>
    <property type="match status" value="1"/>
</dbReference>
<dbReference type="PANTHER" id="PTHR36965:SF1">
    <property type="entry name" value="FE(2+)-TRAFFICKING PROTEIN-RELATED"/>
    <property type="match status" value="1"/>
</dbReference>
<dbReference type="Pfam" id="PF04362">
    <property type="entry name" value="Iron_traffic"/>
    <property type="match status" value="1"/>
</dbReference>
<dbReference type="PIRSF" id="PIRSF029827">
    <property type="entry name" value="Fe_traffic_YggX"/>
    <property type="match status" value="1"/>
</dbReference>
<dbReference type="SUPFAM" id="SSF111148">
    <property type="entry name" value="YggX-like"/>
    <property type="match status" value="1"/>
</dbReference>
<reference key="1">
    <citation type="journal article" date="2000" name="Nature">
        <title>Genome sequence of the endocellular bacterial symbiont of aphids Buchnera sp. APS.</title>
        <authorList>
            <person name="Shigenobu S."/>
            <person name="Watanabe H."/>
            <person name="Hattori M."/>
            <person name="Sakaki Y."/>
            <person name="Ishikawa H."/>
        </authorList>
    </citation>
    <scope>NUCLEOTIDE SEQUENCE [LARGE SCALE GENOMIC DNA]</scope>
    <source>
        <strain>APS</strain>
    </source>
</reference>
<evidence type="ECO:0000255" key="1">
    <source>
        <dbReference type="HAMAP-Rule" id="MF_00686"/>
    </source>
</evidence>
<evidence type="ECO:0000305" key="2"/>
<protein>
    <recommendedName>
        <fullName evidence="1">Probable Fe(2+)-trafficking protein</fullName>
    </recommendedName>
</protein>
<keyword id="KW-0408">Iron</keyword>
<keyword id="KW-1185">Reference proteome</keyword>
<proteinExistence type="inferred from homology"/>
<sequence length="77" mass="9511">MNRIIFCTFFKKKSEGQDFQSYPGKLGKKIYDQISKKAWEKWIEKQTILINEENLNMFNLEHRKKIEKYMKLFLFKK</sequence>
<organism>
    <name type="scientific">Buchnera aphidicola subsp. Acyrthosiphon pisum (strain APS)</name>
    <name type="common">Acyrthosiphon pisum symbiotic bacterium</name>
    <dbReference type="NCBI Taxonomy" id="107806"/>
    <lineage>
        <taxon>Bacteria</taxon>
        <taxon>Pseudomonadati</taxon>
        <taxon>Pseudomonadota</taxon>
        <taxon>Gammaproteobacteria</taxon>
        <taxon>Enterobacterales</taxon>
        <taxon>Erwiniaceae</taxon>
        <taxon>Buchnera</taxon>
    </lineage>
</organism>
<feature type="chain" id="PRO_0000214470" description="Probable Fe(2+)-trafficking protein">
    <location>
        <begin position="1"/>
        <end position="77"/>
    </location>
</feature>
<name>FETP_BUCAI</name>
<comment type="function">
    <text evidence="1">Could be a mediator in iron transactions between iron acquisition and iron-requiring processes, such as synthesis and/or repair of Fe-S clusters in biosynthetic enzymes.</text>
</comment>
<comment type="subunit">
    <text evidence="1">Monomer.</text>
</comment>
<comment type="similarity">
    <text evidence="1">Belongs to the Fe(2+)-trafficking protein family.</text>
</comment>
<comment type="sequence caution" evidence="2">
    <conflict type="erroneous initiation">
        <sequence resource="EMBL-CDS" id="BAB13245"/>
    </conflict>
</comment>
<accession>P57618</accession>